<proteinExistence type="evidence at protein level"/>
<dbReference type="EC" id="1.8.4.12" evidence="1"/>
<dbReference type="EMBL" id="BA000018">
    <property type="protein sequence ID" value="BAB42516.1"/>
    <property type="molecule type" value="Genomic_DNA"/>
</dbReference>
<dbReference type="PIR" id="G89919">
    <property type="entry name" value="G89919"/>
</dbReference>
<dbReference type="RefSeq" id="WP_000913317.1">
    <property type="nucleotide sequence ID" value="NC_002745.2"/>
</dbReference>
<dbReference type="SMR" id="P99065"/>
<dbReference type="EnsemblBacteria" id="BAB42516">
    <property type="protein sequence ID" value="BAB42516"/>
    <property type="gene ID" value="BAB42516"/>
</dbReference>
<dbReference type="KEGG" id="sau:SA1256"/>
<dbReference type="HOGENOM" id="CLU_031040_8_5_9"/>
<dbReference type="GO" id="GO:0005737">
    <property type="term" value="C:cytoplasm"/>
    <property type="evidence" value="ECO:0007669"/>
    <property type="project" value="TreeGrafter"/>
</dbReference>
<dbReference type="GO" id="GO:0033743">
    <property type="term" value="F:peptide-methionine (R)-S-oxide reductase activity"/>
    <property type="evidence" value="ECO:0007669"/>
    <property type="project" value="UniProtKB-UniRule"/>
</dbReference>
<dbReference type="GO" id="GO:0030091">
    <property type="term" value="P:protein repair"/>
    <property type="evidence" value="ECO:0007669"/>
    <property type="project" value="InterPro"/>
</dbReference>
<dbReference type="GO" id="GO:0006979">
    <property type="term" value="P:response to oxidative stress"/>
    <property type="evidence" value="ECO:0007669"/>
    <property type="project" value="InterPro"/>
</dbReference>
<dbReference type="FunFam" id="2.170.150.20:FF:000003">
    <property type="entry name" value="Peptide methionine sulfoxide reductase MsrB"/>
    <property type="match status" value="1"/>
</dbReference>
<dbReference type="Gene3D" id="2.170.150.20">
    <property type="entry name" value="Peptide methionine sulfoxide reductase"/>
    <property type="match status" value="1"/>
</dbReference>
<dbReference type="HAMAP" id="MF_01400">
    <property type="entry name" value="MsrB"/>
    <property type="match status" value="1"/>
</dbReference>
<dbReference type="InterPro" id="IPR028427">
    <property type="entry name" value="Met_Sox_Rdtase_MsrB"/>
</dbReference>
<dbReference type="InterPro" id="IPR002579">
    <property type="entry name" value="Met_Sox_Rdtase_MsrB_dom"/>
</dbReference>
<dbReference type="InterPro" id="IPR011057">
    <property type="entry name" value="Mss4-like_sf"/>
</dbReference>
<dbReference type="NCBIfam" id="TIGR00357">
    <property type="entry name" value="peptide-methionine (R)-S-oxide reductase MsrB"/>
    <property type="match status" value="1"/>
</dbReference>
<dbReference type="PANTHER" id="PTHR10173">
    <property type="entry name" value="METHIONINE SULFOXIDE REDUCTASE"/>
    <property type="match status" value="1"/>
</dbReference>
<dbReference type="PANTHER" id="PTHR10173:SF59">
    <property type="entry name" value="PEPTIDE METHIONINE SULFOXIDE REDUCTASE MSRA_MSRB"/>
    <property type="match status" value="1"/>
</dbReference>
<dbReference type="Pfam" id="PF01641">
    <property type="entry name" value="SelR"/>
    <property type="match status" value="1"/>
</dbReference>
<dbReference type="SUPFAM" id="SSF51316">
    <property type="entry name" value="Mss4-like"/>
    <property type="match status" value="1"/>
</dbReference>
<dbReference type="PROSITE" id="PS51790">
    <property type="entry name" value="MSRB"/>
    <property type="match status" value="1"/>
</dbReference>
<keyword id="KW-0560">Oxidoreductase</keyword>
<name>MSRB_STAAN</name>
<protein>
    <recommendedName>
        <fullName evidence="1">Peptide methionine sulfoxide reductase MsrB</fullName>
        <ecNumber evidence="1">1.8.4.12</ecNumber>
    </recommendedName>
    <alternativeName>
        <fullName evidence="1">Peptide-methionine (R)-S-oxide reductase</fullName>
    </alternativeName>
</protein>
<feature type="chain" id="PRO_0000140296" description="Peptide methionine sulfoxide reductase MsrB">
    <location>
        <begin position="1"/>
        <end position="142"/>
    </location>
</feature>
<feature type="domain" description="MsrB" evidence="2">
    <location>
        <begin position="2"/>
        <end position="125"/>
    </location>
</feature>
<feature type="active site" description="Nucleophile" evidence="2">
    <location>
        <position position="114"/>
    </location>
</feature>
<sequence length="142" mass="16263">MLKKDKSELTDIEYIVTQENGTEPPFMNEYWNHFAKGIYVDKISGKPLFTSEEKFHSECGWPSFSKALDDDEIIELVDKSFGMVRTEVRSEESNSHLGHVFNDGPKESGGLRYCINSAAIQFIPYEKLEELGYGDLISHFDK</sequence>
<gene>
    <name evidence="1" type="primary">msrB</name>
    <name type="ordered locus">SA1256</name>
</gene>
<comment type="catalytic activity">
    <reaction evidence="1">
        <text>L-methionyl-[protein] + [thioredoxin]-disulfide + H2O = L-methionyl-(R)-S-oxide-[protein] + [thioredoxin]-dithiol</text>
        <dbReference type="Rhea" id="RHEA:24164"/>
        <dbReference type="Rhea" id="RHEA-COMP:10698"/>
        <dbReference type="Rhea" id="RHEA-COMP:10700"/>
        <dbReference type="Rhea" id="RHEA-COMP:12313"/>
        <dbReference type="Rhea" id="RHEA-COMP:12314"/>
        <dbReference type="ChEBI" id="CHEBI:15377"/>
        <dbReference type="ChEBI" id="CHEBI:16044"/>
        <dbReference type="ChEBI" id="CHEBI:29950"/>
        <dbReference type="ChEBI" id="CHEBI:45764"/>
        <dbReference type="ChEBI" id="CHEBI:50058"/>
        <dbReference type="EC" id="1.8.4.12"/>
    </reaction>
</comment>
<comment type="similarity">
    <text evidence="1">Belongs to the MsrB Met sulfoxide reductase family.</text>
</comment>
<organism>
    <name type="scientific">Staphylococcus aureus (strain N315)</name>
    <dbReference type="NCBI Taxonomy" id="158879"/>
    <lineage>
        <taxon>Bacteria</taxon>
        <taxon>Bacillati</taxon>
        <taxon>Bacillota</taxon>
        <taxon>Bacilli</taxon>
        <taxon>Bacillales</taxon>
        <taxon>Staphylococcaceae</taxon>
        <taxon>Staphylococcus</taxon>
    </lineage>
</organism>
<evidence type="ECO:0000255" key="1">
    <source>
        <dbReference type="HAMAP-Rule" id="MF_01400"/>
    </source>
</evidence>
<evidence type="ECO:0000255" key="2">
    <source>
        <dbReference type="PROSITE-ProRule" id="PRU01126"/>
    </source>
</evidence>
<reference key="1">
    <citation type="journal article" date="2001" name="Lancet">
        <title>Whole genome sequencing of meticillin-resistant Staphylococcus aureus.</title>
        <authorList>
            <person name="Kuroda M."/>
            <person name="Ohta T."/>
            <person name="Uchiyama I."/>
            <person name="Baba T."/>
            <person name="Yuzawa H."/>
            <person name="Kobayashi I."/>
            <person name="Cui L."/>
            <person name="Oguchi A."/>
            <person name="Aoki K."/>
            <person name="Nagai Y."/>
            <person name="Lian J.-Q."/>
            <person name="Ito T."/>
            <person name="Kanamori M."/>
            <person name="Matsumaru H."/>
            <person name="Maruyama A."/>
            <person name="Murakami H."/>
            <person name="Hosoyama A."/>
            <person name="Mizutani-Ui Y."/>
            <person name="Takahashi N.K."/>
            <person name="Sawano T."/>
            <person name="Inoue R."/>
            <person name="Kaito C."/>
            <person name="Sekimizu K."/>
            <person name="Hirakawa H."/>
            <person name="Kuhara S."/>
            <person name="Goto S."/>
            <person name="Yabuzaki J."/>
            <person name="Kanehisa M."/>
            <person name="Yamashita A."/>
            <person name="Oshima K."/>
            <person name="Furuya K."/>
            <person name="Yoshino C."/>
            <person name="Shiba T."/>
            <person name="Hattori M."/>
            <person name="Ogasawara N."/>
            <person name="Hayashi H."/>
            <person name="Hiramatsu K."/>
        </authorList>
    </citation>
    <scope>NUCLEOTIDE SEQUENCE [LARGE SCALE GENOMIC DNA]</scope>
    <source>
        <strain>N315</strain>
    </source>
</reference>
<reference key="2">
    <citation type="journal article" date="2005" name="J. Microbiol. Methods">
        <title>Correlation of proteomic and transcriptomic profiles of Staphylococcus aureus during the post-exponential phase of growth.</title>
        <authorList>
            <person name="Scherl A."/>
            <person name="Francois P."/>
            <person name="Bento M."/>
            <person name="Deshusses J.M."/>
            <person name="Charbonnier Y."/>
            <person name="Converset V."/>
            <person name="Huyghe A."/>
            <person name="Walter N."/>
            <person name="Hoogland C."/>
            <person name="Appel R.D."/>
            <person name="Sanchez J.-C."/>
            <person name="Zimmermann-Ivol C.G."/>
            <person name="Corthals G.L."/>
            <person name="Hochstrasser D.F."/>
            <person name="Schrenzel J."/>
        </authorList>
    </citation>
    <scope>IDENTIFICATION BY MASS SPECTROMETRY</scope>
    <source>
        <strain>N315</strain>
    </source>
</reference>
<reference key="3">
    <citation type="submission" date="2007-10" db="UniProtKB">
        <title>Shotgun proteomic analysis of total and membrane protein extracts of S. aureus strain N315.</title>
        <authorList>
            <person name="Vaezzadeh A.R."/>
            <person name="Deshusses J."/>
            <person name="Lescuyer P."/>
            <person name="Hochstrasser D.F."/>
        </authorList>
    </citation>
    <scope>IDENTIFICATION BY MASS SPECTROMETRY [LARGE SCALE ANALYSIS]</scope>
    <source>
        <strain>N315</strain>
    </source>
</reference>
<accession>P99065</accession>
<accession>Q99U64</accession>